<accession>Q5VV67</accession>
<accession>Q5VV66</accession>
<accession>Q6P3U5</accession>
<accession>Q6P3W1</accession>
<accession>Q76N31</accession>
<accession>Q9BUJ3</accession>
<accession>Q9BZE5</accession>
<accession>Q9Y4E0</accession>
<feature type="chain" id="PRO_0000296666" description="Peroxisome proliferator-activated receptor gamma coactivator-related protein 1">
    <location>
        <begin position="1"/>
        <end position="1664"/>
    </location>
</feature>
<feature type="domain" description="RRM" evidence="2">
    <location>
        <begin position="1543"/>
        <end position="1619"/>
    </location>
</feature>
<feature type="region of interest" description="Disordered" evidence="3">
    <location>
        <begin position="1"/>
        <end position="44"/>
    </location>
</feature>
<feature type="region of interest" description="Disordered" evidence="3">
    <location>
        <begin position="167"/>
        <end position="255"/>
    </location>
</feature>
<feature type="region of interest" description="Necessary for interaction with CREB1 and NRF1 and for transcriptional coactivation" evidence="7">
    <location>
        <begin position="433"/>
        <end position="467"/>
    </location>
</feature>
<feature type="region of interest" description="Disordered" evidence="3">
    <location>
        <begin position="436"/>
        <end position="555"/>
    </location>
</feature>
<feature type="region of interest" description="Disordered" evidence="3">
    <location>
        <begin position="681"/>
        <end position="701"/>
    </location>
</feature>
<feature type="region of interest" description="Disordered" evidence="3">
    <location>
        <begin position="735"/>
        <end position="793"/>
    </location>
</feature>
<feature type="region of interest" description="Disordered" evidence="3">
    <location>
        <begin position="818"/>
        <end position="873"/>
    </location>
</feature>
<feature type="region of interest" description="Disordered" evidence="3">
    <location>
        <begin position="1045"/>
        <end position="1068"/>
    </location>
</feature>
<feature type="region of interest" description="Disordered" evidence="3">
    <location>
        <begin position="1093"/>
        <end position="1130"/>
    </location>
</feature>
<feature type="region of interest" description="Disordered" evidence="3">
    <location>
        <begin position="1182"/>
        <end position="1209"/>
    </location>
</feature>
<feature type="region of interest" description="Disordered" evidence="3">
    <location>
        <begin position="1334"/>
        <end position="1528"/>
    </location>
</feature>
<feature type="region of interest" description="Necessary for interaction with CREB1 and NRF1" evidence="7">
    <location>
        <begin position="1379"/>
        <end position="1450"/>
    </location>
</feature>
<feature type="compositionally biased region" description="Pro residues" evidence="3">
    <location>
        <begin position="12"/>
        <end position="22"/>
    </location>
</feature>
<feature type="compositionally biased region" description="Gly residues" evidence="3">
    <location>
        <begin position="23"/>
        <end position="32"/>
    </location>
</feature>
<feature type="compositionally biased region" description="Low complexity" evidence="3">
    <location>
        <begin position="201"/>
        <end position="224"/>
    </location>
</feature>
<feature type="compositionally biased region" description="Basic residues" evidence="3">
    <location>
        <begin position="455"/>
        <end position="464"/>
    </location>
</feature>
<feature type="compositionally biased region" description="Polar residues" evidence="3">
    <location>
        <begin position="482"/>
        <end position="499"/>
    </location>
</feature>
<feature type="compositionally biased region" description="Low complexity" evidence="3">
    <location>
        <begin position="522"/>
        <end position="531"/>
    </location>
</feature>
<feature type="compositionally biased region" description="Polar residues" evidence="3">
    <location>
        <begin position="533"/>
        <end position="549"/>
    </location>
</feature>
<feature type="compositionally biased region" description="Pro residues" evidence="3">
    <location>
        <begin position="823"/>
        <end position="836"/>
    </location>
</feature>
<feature type="compositionally biased region" description="Low complexity" evidence="3">
    <location>
        <begin position="862"/>
        <end position="873"/>
    </location>
</feature>
<feature type="compositionally biased region" description="Basic and acidic residues" evidence="3">
    <location>
        <begin position="1096"/>
        <end position="1113"/>
    </location>
</feature>
<feature type="compositionally biased region" description="Low complexity" evidence="3">
    <location>
        <begin position="1365"/>
        <end position="1383"/>
    </location>
</feature>
<feature type="compositionally biased region" description="Basic residues" evidence="3">
    <location>
        <begin position="1400"/>
        <end position="1409"/>
    </location>
</feature>
<feature type="compositionally biased region" description="Low complexity" evidence="3">
    <location>
        <begin position="1427"/>
        <end position="1459"/>
    </location>
</feature>
<feature type="compositionally biased region" description="Low complexity" evidence="3">
    <location>
        <begin position="1468"/>
        <end position="1500"/>
    </location>
</feature>
<feature type="compositionally biased region" description="Basic residues" evidence="3">
    <location>
        <begin position="1501"/>
        <end position="1519"/>
    </location>
</feature>
<feature type="modified residue" description="Phosphoserine" evidence="13">
    <location>
        <position position="237"/>
    </location>
</feature>
<feature type="modified residue" description="Phosphoserine" evidence="11">
    <location>
        <position position="536"/>
    </location>
</feature>
<feature type="modified residue" description="Phosphoserine" evidence="13">
    <location>
        <position position="548"/>
    </location>
</feature>
<feature type="modified residue" description="Phosphoserine" evidence="13">
    <location>
        <position position="1076"/>
    </location>
</feature>
<feature type="modified residue" description="Phosphoserine" evidence="12">
    <location>
        <position position="1411"/>
    </location>
</feature>
<feature type="modified residue" description="Phosphoserine" evidence="12">
    <location>
        <position position="1413"/>
    </location>
</feature>
<feature type="splice variant" id="VSP_027229" description="In isoform 2." evidence="9">
    <location>
        <begin position="1"/>
        <end position="120"/>
    </location>
</feature>
<feature type="splice variant" id="VSP_027230" description="In isoform 2." evidence="9">
    <original>DQNEVSLLTALTEILDNADSENLSPFD</original>
    <variation>MRHCWGPCRATWMPPLSPSLRILGALE</variation>
    <location>
        <begin position="121"/>
        <end position="147"/>
    </location>
</feature>
<feature type="splice variant" id="VSP_027231" description="In isoform 2." evidence="9">
    <location>
        <begin position="1518"/>
        <end position="1519"/>
    </location>
</feature>
<feature type="sequence variant" id="VAR_034633" description="In dbSNP:rs17114388.">
    <original>S</original>
    <variation>G</variation>
    <location>
        <position position="536"/>
    </location>
</feature>
<feature type="sequence variant" id="VAR_034634" description="In dbSNP:rs17855877." evidence="6">
    <original>P</original>
    <variation>R</variation>
    <location>
        <position position="834"/>
    </location>
</feature>
<feature type="sequence variant" id="VAR_074628" description="In dbSNP:rs118161359." evidence="8">
    <original>R</original>
    <variation>Q</variation>
    <location>
        <position position="1288"/>
    </location>
</feature>
<feature type="sequence conflict" description="In Ref. 1; AAK11573." evidence="10" ref="1">
    <original>G</original>
    <variation>R</variation>
    <location>
        <position position="33"/>
    </location>
</feature>
<feature type="sequence conflict" description="In Ref. 1; AAK11573." evidence="10" ref="1">
    <original>L</original>
    <variation>Q</variation>
    <location>
        <position position="69"/>
    </location>
</feature>
<feature type="sequence conflict" description="In Ref. 1; AAK11573." evidence="10" ref="1">
    <original>Q</original>
    <variation>H</variation>
    <location>
        <position position="122"/>
    </location>
</feature>
<reference key="1">
    <citation type="journal article" date="2001" name="Mol. Cell. Biol.">
        <title>Pgc-1-related coactivator, a novel, serum-inducible coactivator of nuclear respiratory factor 1-dependent transcription in mammalian cells.</title>
        <authorList>
            <person name="Andersson U."/>
            <person name="Scarpulla R.C."/>
        </authorList>
    </citation>
    <scope>NUCLEOTIDE SEQUENCE [MRNA] (ISOFORM 1)</scope>
    <scope>FUNCTION</scope>
    <scope>INTERACTION WITH NRF1</scope>
    <scope>SUBCELLULAR LOCATION</scope>
    <scope>TISSUE SPECIFICITY</scope>
</reference>
<reference key="2">
    <citation type="journal article" date="1998" name="DNA Res.">
        <title>Prediction of the coding sequences of unidentified human genes. IX. The complete sequences of 100 new cDNA clones from brain which can code for large proteins in vitro.</title>
        <authorList>
            <person name="Nagase T."/>
            <person name="Ishikawa K."/>
            <person name="Miyajima N."/>
            <person name="Tanaka A."/>
            <person name="Kotani H."/>
            <person name="Nomura N."/>
            <person name="Ohara O."/>
        </authorList>
    </citation>
    <scope>NUCLEOTIDE SEQUENCE [LARGE SCALE MRNA] (ISOFORM 1)</scope>
    <source>
        <tissue>Brain</tissue>
    </source>
</reference>
<reference key="3">
    <citation type="journal article" date="2002" name="DNA Res.">
        <title>Construction of expression-ready cDNA clones for KIAA genes: manual curation of 330 KIAA cDNA clones.</title>
        <authorList>
            <person name="Nakajima D."/>
            <person name="Okazaki N."/>
            <person name="Yamakawa H."/>
            <person name="Kikuno R."/>
            <person name="Ohara O."/>
            <person name="Nagase T."/>
        </authorList>
    </citation>
    <scope>SEQUENCE REVISION</scope>
</reference>
<reference key="4">
    <citation type="journal article" date="2004" name="Nature">
        <title>The DNA sequence and comparative analysis of human chromosome 10.</title>
        <authorList>
            <person name="Deloukas P."/>
            <person name="Earthrowl M.E."/>
            <person name="Grafham D.V."/>
            <person name="Rubenfield M."/>
            <person name="French L."/>
            <person name="Steward C.A."/>
            <person name="Sims S.K."/>
            <person name="Jones M.C."/>
            <person name="Searle S."/>
            <person name="Scott C."/>
            <person name="Howe K."/>
            <person name="Hunt S.E."/>
            <person name="Andrews T.D."/>
            <person name="Gilbert J.G.R."/>
            <person name="Swarbreck D."/>
            <person name="Ashurst J.L."/>
            <person name="Taylor A."/>
            <person name="Battles J."/>
            <person name="Bird C.P."/>
            <person name="Ainscough R."/>
            <person name="Almeida J.P."/>
            <person name="Ashwell R.I.S."/>
            <person name="Ambrose K.D."/>
            <person name="Babbage A.K."/>
            <person name="Bagguley C.L."/>
            <person name="Bailey J."/>
            <person name="Banerjee R."/>
            <person name="Bates K."/>
            <person name="Beasley H."/>
            <person name="Bray-Allen S."/>
            <person name="Brown A.J."/>
            <person name="Brown J.Y."/>
            <person name="Burford D.C."/>
            <person name="Burrill W."/>
            <person name="Burton J."/>
            <person name="Cahill P."/>
            <person name="Camire D."/>
            <person name="Carter N.P."/>
            <person name="Chapman J.C."/>
            <person name="Clark S.Y."/>
            <person name="Clarke G."/>
            <person name="Clee C.M."/>
            <person name="Clegg S."/>
            <person name="Corby N."/>
            <person name="Coulson A."/>
            <person name="Dhami P."/>
            <person name="Dutta I."/>
            <person name="Dunn M."/>
            <person name="Faulkner L."/>
            <person name="Frankish A."/>
            <person name="Frankland J.A."/>
            <person name="Garner P."/>
            <person name="Garnett J."/>
            <person name="Gribble S."/>
            <person name="Griffiths C."/>
            <person name="Grocock R."/>
            <person name="Gustafson E."/>
            <person name="Hammond S."/>
            <person name="Harley J.L."/>
            <person name="Hart E."/>
            <person name="Heath P.D."/>
            <person name="Ho T.P."/>
            <person name="Hopkins B."/>
            <person name="Horne J."/>
            <person name="Howden P.J."/>
            <person name="Huckle E."/>
            <person name="Hynds C."/>
            <person name="Johnson C."/>
            <person name="Johnson D."/>
            <person name="Kana A."/>
            <person name="Kay M."/>
            <person name="Kimberley A.M."/>
            <person name="Kershaw J.K."/>
            <person name="Kokkinaki M."/>
            <person name="Laird G.K."/>
            <person name="Lawlor S."/>
            <person name="Lee H.M."/>
            <person name="Leongamornlert D.A."/>
            <person name="Laird G."/>
            <person name="Lloyd C."/>
            <person name="Lloyd D.M."/>
            <person name="Loveland J."/>
            <person name="Lovell J."/>
            <person name="McLaren S."/>
            <person name="McLay K.E."/>
            <person name="McMurray A."/>
            <person name="Mashreghi-Mohammadi M."/>
            <person name="Matthews L."/>
            <person name="Milne S."/>
            <person name="Nickerson T."/>
            <person name="Nguyen M."/>
            <person name="Overton-Larty E."/>
            <person name="Palmer S.A."/>
            <person name="Pearce A.V."/>
            <person name="Peck A.I."/>
            <person name="Pelan S."/>
            <person name="Phillimore B."/>
            <person name="Porter K."/>
            <person name="Rice C.M."/>
            <person name="Rogosin A."/>
            <person name="Ross M.T."/>
            <person name="Sarafidou T."/>
            <person name="Sehra H.K."/>
            <person name="Shownkeen R."/>
            <person name="Skuce C.D."/>
            <person name="Smith M."/>
            <person name="Standring L."/>
            <person name="Sycamore N."/>
            <person name="Tester J."/>
            <person name="Thorpe A."/>
            <person name="Torcasso W."/>
            <person name="Tracey A."/>
            <person name="Tromans A."/>
            <person name="Tsolas J."/>
            <person name="Wall M."/>
            <person name="Walsh J."/>
            <person name="Wang H."/>
            <person name="Weinstock K."/>
            <person name="West A.P."/>
            <person name="Willey D.L."/>
            <person name="Whitehead S.L."/>
            <person name="Wilming L."/>
            <person name="Wray P.W."/>
            <person name="Young L."/>
            <person name="Chen Y."/>
            <person name="Lovering R.C."/>
            <person name="Moschonas N.K."/>
            <person name="Siebert R."/>
            <person name="Fechtel K."/>
            <person name="Bentley D."/>
            <person name="Durbin R.M."/>
            <person name="Hubbard T."/>
            <person name="Doucette-Stamm L."/>
            <person name="Beck S."/>
            <person name="Smith D.R."/>
            <person name="Rogers J."/>
        </authorList>
    </citation>
    <scope>NUCLEOTIDE SEQUENCE [LARGE SCALE GENOMIC DNA]</scope>
</reference>
<reference key="5">
    <citation type="journal article" date="2004" name="Genome Res.">
        <title>The status, quality, and expansion of the NIH full-length cDNA project: the Mammalian Gene Collection (MGC).</title>
        <authorList>
            <consortium name="The MGC Project Team"/>
        </authorList>
    </citation>
    <scope>NUCLEOTIDE SEQUENCE [LARGE SCALE MRNA] (ISOFORMS 1 AND 2)</scope>
    <scope>NUCLEOTIDE SEQUENCE [LARGE SCALE MRNA] OF 998-1664 (ISOFORM 1)</scope>
    <scope>VARIANT ARG-834</scope>
    <source>
        <tissue>Placenta</tissue>
        <tissue>Uterus</tissue>
    </source>
</reference>
<reference key="6">
    <citation type="journal article" date="2003" name="Biochem. Biophys. Res. Commun.">
        <title>PGC-1-related coactivator and targets are upregulated in thyroid oncocytoma.</title>
        <authorList>
            <person name="Savagner F."/>
            <person name="Mirebeau D."/>
            <person name="Jacques C."/>
            <person name="Guyetant S."/>
            <person name="Morgan C."/>
            <person name="Franc B."/>
            <person name="Reynier P."/>
            <person name="Malthiery Y."/>
        </authorList>
    </citation>
    <scope>TISSUE SPECIFICITY</scope>
</reference>
<reference key="7">
    <citation type="journal article" date="2006" name="Mol. Cell. Biol.">
        <title>PGC-1-related coactivator: immediate early expression and characterization of a CREB/NRF-1 binding domain associated with cytochrome c promoter occupancy and respiratory growth.</title>
        <authorList>
            <person name="Vercauteren K."/>
            <person name="Pasko R.A."/>
            <person name="Gleyzer N."/>
            <person name="Marino V.M."/>
            <person name="Scarpulla R.C."/>
        </authorList>
    </citation>
    <scope>FUNCTION</scope>
    <scope>INTERACTION WITH CREB1 AND NRF1</scope>
    <scope>INDUCTION</scope>
</reference>
<reference key="8">
    <citation type="journal article" date="2010" name="Sci. Signal.">
        <title>Quantitative phosphoproteomics reveals widespread full phosphorylation site occupancy during mitosis.</title>
        <authorList>
            <person name="Olsen J.V."/>
            <person name="Vermeulen M."/>
            <person name="Santamaria A."/>
            <person name="Kumar C."/>
            <person name="Miller M.L."/>
            <person name="Jensen L.J."/>
            <person name="Gnad F."/>
            <person name="Cox J."/>
            <person name="Jensen T.S."/>
            <person name="Nigg E.A."/>
            <person name="Brunak S."/>
            <person name="Mann M."/>
        </authorList>
    </citation>
    <scope>PHOSPHORYLATION [LARGE SCALE ANALYSIS] AT SER-536</scope>
    <scope>IDENTIFICATION BY MASS SPECTROMETRY [LARGE SCALE ANALYSIS]</scope>
    <source>
        <tissue>Cervix carcinoma</tissue>
    </source>
</reference>
<reference key="9">
    <citation type="journal article" date="2011" name="Sci. Signal.">
        <title>System-wide temporal characterization of the proteome and phosphoproteome of human embryonic stem cell differentiation.</title>
        <authorList>
            <person name="Rigbolt K.T."/>
            <person name="Prokhorova T.A."/>
            <person name="Akimov V."/>
            <person name="Henningsen J."/>
            <person name="Johansen P.T."/>
            <person name="Kratchmarova I."/>
            <person name="Kassem M."/>
            <person name="Mann M."/>
            <person name="Olsen J.V."/>
            <person name="Blagoev B."/>
        </authorList>
    </citation>
    <scope>PHOSPHORYLATION [LARGE SCALE ANALYSIS] AT SER-1411 AND SER-1413</scope>
    <scope>IDENTIFICATION BY MASS SPECTROMETRY [LARGE SCALE ANALYSIS]</scope>
</reference>
<reference key="10">
    <citation type="journal article" date="2013" name="J. Proteome Res.">
        <title>Toward a comprehensive characterization of a human cancer cell phosphoproteome.</title>
        <authorList>
            <person name="Zhou H."/>
            <person name="Di Palma S."/>
            <person name="Preisinger C."/>
            <person name="Peng M."/>
            <person name="Polat A.N."/>
            <person name="Heck A.J."/>
            <person name="Mohammed S."/>
        </authorList>
    </citation>
    <scope>PHOSPHORYLATION [LARGE SCALE ANALYSIS] AT SER-237; SER-548 AND SER-1076</scope>
    <scope>IDENTIFICATION BY MASS SPECTROMETRY [LARGE SCALE ANALYSIS]</scope>
    <source>
        <tissue>Cervix carcinoma</tissue>
        <tissue>Erythroleukemia</tissue>
    </source>
</reference>
<reference key="11">
    <citation type="journal article" date="2015" name="Hum. Mutat.">
        <title>Mutations in collagen, type XVII, alpha 1 (COL17A1) cause epithelial recurrent erosion dystrophy (ERED).</title>
        <authorList>
            <person name="Jonsson F."/>
            <person name="Bystroem B."/>
            <person name="Davidson A.E."/>
            <person name="Backman L.J."/>
            <person name="Kellgren T.G."/>
            <person name="Tuft S.J."/>
            <person name="Koskela T."/>
            <person name="Ryden P."/>
            <person name="Sandgren O."/>
            <person name="Danielson P."/>
            <person name="Hardcastle A.J."/>
            <person name="Golovleva I."/>
        </authorList>
    </citation>
    <scope>VARIANT GLN-1288</scope>
</reference>
<sequence length="1664" mass="177544">MAARRGRRDGVAPPPSGGPGPDPGGGARGSGWGSRSQAPYGTLGAVSGGEQVLLHEEAGDSGFVSLSRLGPSLRDKDLEMEELMLQDETLLGTMQSYMDASLISLIEDFGSLGESRLSLEDQNEVSLLTALTEILDNADSENLSPFDSIPDSELLVSPREGSSLHKLLTLSRTPPERDLITPVDPLGPSTGSSRGSGVEMSLPDPSWDFSPPSFLETSSPKLPSWRPPRSRPRWGQSPPPQQRSDGEEEEEVASFSGQILAGELDNCVSSIPDFPMHLACPEEEDKATAAEMAVPAAGDESISSLSELVRAMHPYCLPNLTHLASLEDELQEQPDDLTLPEGCVVLEIVGQAATAGDDLEIPVVVRQVSPGPRPVLLDDSLETSSALQLLMPTLESETEAAVPKVTLCSEKEGLSLNSEEKLDSACLLKPREVVEPVVPKEPQNPPANAAPGSQRARKGRKKKSKEQPAACVEGYARRLRSSSRGQSTVGTEVTSQVDNLQKQPQEELQKESGPLQGKGKPRAWARAWAAALENSSPKNLERSAGQSSPAKEGPLDLYPKLADTIQTNPIPTHLSLVDSAQASPMPVDSVEADPTAVGPVLAGPVPVDPGLVDLASTSSELVEPLPAEPVLINPVLADSAAVDPAVVPISDNLPPVDAVPSGPAPVDLALVDPVPNDLTPVDPVLVKSRPTDPRRGAVSSALGGSAPQLLVESESLDPPKTIIPEVKEVVDSLKIESGTSATTHEARPRPLSLSEYRRRRQQRQAETEERSPQPPTGKWPSLPETPTGLADIPCLVIPPAPAKKTALQRSPETPLEICLVPVGPSPASPSPEPPVSKPVASSPTEQVPSQEMPLLARPSPPVQSVSPAVPTPPSMSAALPFPAGGLGMPPSLPPPPLQPPSLPLSMGPVLPDPFTHYAPLPSWPCYPHVSPSGYPCLPPPPTVPLVSGTPGAYAVPPTCSVPWAPPPAPVSPYSSTCTYGPLGWGPGPQHAPFWSTVPPPPLPPASIGRAVPQPKMESRGTPAGPPENVLPLSMAPPLSLGLPGHGAPQTEPTKVEVKPVPASPHPKHKVSALVQSPQMKALACVSAEGVTVEEPASERLKPETQETRPREKPPLPATKAVPTPRQSTVPKLPAVHPARLRKLSFLPTPRTQGSEDVVQAFISEIGIEASDLSSLLEQFEKSEAKKECPPPAPADSLAVGNSGGVDIPQEKRPLDRLQAPELANVAGLTPPATPPHQLWKPLAAVSLLAKAKSPKSTAQEGTLKPEGVTEAKHPAAVRLQEGVHGPSRVHVGSGDHDYCVRSRTPPKKMPALVIPEVGSRWNVKRHQDITIKPVLSLGPAAPPPPCIAASREPLDHRTSSEQADPSAPCLAPSSLLSPEASPCRNDMNTRTPPEPSAKQRSMRCYRKACRSASPSSQGWQGRRGRNSRSVSSGSNRTSEASSSSSSSSSSSRSRSRSLSPPHKRWRRSSCSSSGRSRRCSSSSSSSSSSSSSSSSSSSSRSRSRSPSPRRRSDRRRRYSSYRSHDHYQRQRVLQKERAIEERRVVFIGKIPGRMTRSELKQRFSVFGEIEECTIHFRVQGDNYGFVTYRYAEEAFAAIESGHKLRQADEQPFDLCFGGRRQFCKRSYSDLDSNREDFDPAPVKSKFDSLDFDTLLKQAQKNLRR</sequence>
<gene>
    <name type="primary">PPRC1</name>
    <name type="synonym">KIAA0595</name>
</gene>
<dbReference type="EMBL" id="AF325193">
    <property type="protein sequence ID" value="AAK11573.1"/>
    <property type="molecule type" value="mRNA"/>
</dbReference>
<dbReference type="EMBL" id="AB011167">
    <property type="protein sequence ID" value="BAA25521.2"/>
    <property type="status" value="ALT_INIT"/>
    <property type="molecule type" value="mRNA"/>
</dbReference>
<dbReference type="EMBL" id="AL500527">
    <property type="status" value="NOT_ANNOTATED_CDS"/>
    <property type="molecule type" value="Genomic_DNA"/>
</dbReference>
<dbReference type="EMBL" id="BC002561">
    <property type="protein sequence ID" value="AAH02561.2"/>
    <property type="status" value="ALT_FRAME"/>
    <property type="molecule type" value="mRNA"/>
</dbReference>
<dbReference type="EMBL" id="BC063806">
    <property type="protein sequence ID" value="AAH63806.1"/>
    <property type="molecule type" value="mRNA"/>
</dbReference>
<dbReference type="EMBL" id="BC063829">
    <property type="protein sequence ID" value="AAH63829.1"/>
    <property type="molecule type" value="mRNA"/>
</dbReference>
<dbReference type="CCDS" id="CCDS7529.1">
    <molecule id="Q5VV67-1"/>
</dbReference>
<dbReference type="PIR" id="T00273">
    <property type="entry name" value="T00273"/>
</dbReference>
<dbReference type="RefSeq" id="NP_001275656.1">
    <property type="nucleotide sequence ID" value="NM_001288727.1"/>
</dbReference>
<dbReference type="RefSeq" id="NP_001275657.1">
    <molecule id="Q5VV67-2"/>
    <property type="nucleotide sequence ID" value="NM_001288728.2"/>
</dbReference>
<dbReference type="RefSeq" id="NP_055877.3">
    <molecule id="Q5VV67-1"/>
    <property type="nucleotide sequence ID" value="NM_015062.4"/>
</dbReference>
<dbReference type="SMR" id="Q5VV67"/>
<dbReference type="BioGRID" id="116713">
    <property type="interactions" value="25"/>
</dbReference>
<dbReference type="ELM" id="Q5VV67"/>
<dbReference type="FunCoup" id="Q5VV67">
    <property type="interactions" value="3140"/>
</dbReference>
<dbReference type="IntAct" id="Q5VV67">
    <property type="interactions" value="15"/>
</dbReference>
<dbReference type="MINT" id="Q5VV67"/>
<dbReference type="STRING" id="9606.ENSP00000278070"/>
<dbReference type="GlyGen" id="Q5VV67">
    <property type="glycosylation" value="5 sites, 1 O-linked glycan (1 site)"/>
</dbReference>
<dbReference type="iPTMnet" id="Q5VV67"/>
<dbReference type="PhosphoSitePlus" id="Q5VV67"/>
<dbReference type="BioMuta" id="PPRC1"/>
<dbReference type="DMDM" id="74756889"/>
<dbReference type="jPOST" id="Q5VV67"/>
<dbReference type="MassIVE" id="Q5VV67"/>
<dbReference type="PaxDb" id="9606-ENSP00000278070"/>
<dbReference type="PeptideAtlas" id="Q5VV67"/>
<dbReference type="ProteomicsDB" id="65451">
    <molecule id="Q5VV67-1"/>
</dbReference>
<dbReference type="ProteomicsDB" id="65452">
    <molecule id="Q5VV67-2"/>
</dbReference>
<dbReference type="Pumba" id="Q5VV67"/>
<dbReference type="Antibodypedia" id="48608">
    <property type="antibodies" value="118 antibodies from 25 providers"/>
</dbReference>
<dbReference type="DNASU" id="23082"/>
<dbReference type="Ensembl" id="ENST00000278070.7">
    <molecule id="Q5VV67-1"/>
    <property type="protein sequence ID" value="ENSP00000278070.2"/>
    <property type="gene ID" value="ENSG00000148840.11"/>
</dbReference>
<dbReference type="GeneID" id="23082"/>
<dbReference type="KEGG" id="hsa:23082"/>
<dbReference type="MANE-Select" id="ENST00000278070.7">
    <property type="protein sequence ID" value="ENSP00000278070.2"/>
    <property type="RefSeq nucleotide sequence ID" value="NM_015062.5"/>
    <property type="RefSeq protein sequence ID" value="NP_055877.3"/>
</dbReference>
<dbReference type="UCSC" id="uc001kum.5">
    <molecule id="Q5VV67-1"/>
    <property type="organism name" value="human"/>
</dbReference>
<dbReference type="AGR" id="HGNC:30025"/>
<dbReference type="CTD" id="23082"/>
<dbReference type="DisGeNET" id="23082"/>
<dbReference type="GeneCards" id="PPRC1"/>
<dbReference type="HGNC" id="HGNC:30025">
    <property type="gene designation" value="PPRC1"/>
</dbReference>
<dbReference type="HPA" id="ENSG00000148840">
    <property type="expression patterns" value="Low tissue specificity"/>
</dbReference>
<dbReference type="MalaCards" id="PPRC1"/>
<dbReference type="MIM" id="617462">
    <property type="type" value="gene"/>
</dbReference>
<dbReference type="neXtProt" id="NX_Q5VV67"/>
<dbReference type="OpenTargets" id="ENSG00000148840"/>
<dbReference type="PharmGKB" id="PA134886297"/>
<dbReference type="VEuPathDB" id="HostDB:ENSG00000148840"/>
<dbReference type="eggNOG" id="ENOG502QQME">
    <property type="taxonomic scope" value="Eukaryota"/>
</dbReference>
<dbReference type="GeneTree" id="ENSGT00950000183137"/>
<dbReference type="HOGENOM" id="CLU_001907_0_0_1"/>
<dbReference type="InParanoid" id="Q5VV67"/>
<dbReference type="OMA" id="WHRAREQ"/>
<dbReference type="OrthoDB" id="10047851at2759"/>
<dbReference type="PAN-GO" id="Q5VV67">
    <property type="GO annotations" value="5 GO annotations based on evolutionary models"/>
</dbReference>
<dbReference type="PhylomeDB" id="Q5VV67"/>
<dbReference type="TreeFam" id="TF343068"/>
<dbReference type="PathwayCommons" id="Q5VV67"/>
<dbReference type="Reactome" id="R-HSA-2151201">
    <property type="pathway name" value="Transcriptional activation of mitochondrial biogenesis"/>
</dbReference>
<dbReference type="SignaLink" id="Q5VV67"/>
<dbReference type="BioGRID-ORCS" id="23082">
    <property type="hits" value="422 hits in 1175 CRISPR screens"/>
</dbReference>
<dbReference type="ChiTaRS" id="PPRC1">
    <property type="organism name" value="human"/>
</dbReference>
<dbReference type="GeneWiki" id="PPRC1"/>
<dbReference type="GenomeRNAi" id="23082"/>
<dbReference type="Pharos" id="Q5VV67">
    <property type="development level" value="Tbio"/>
</dbReference>
<dbReference type="PRO" id="PR:Q5VV67"/>
<dbReference type="Proteomes" id="UP000005640">
    <property type="component" value="Chromosome 10"/>
</dbReference>
<dbReference type="RNAct" id="Q5VV67">
    <property type="molecule type" value="protein"/>
</dbReference>
<dbReference type="Bgee" id="ENSG00000148840">
    <property type="expression patterns" value="Expressed in left uterine tube and 178 other cell types or tissues"/>
</dbReference>
<dbReference type="ExpressionAtlas" id="Q5VV67">
    <property type="expression patterns" value="baseline and differential"/>
</dbReference>
<dbReference type="GO" id="GO:0005654">
    <property type="term" value="C:nucleoplasm"/>
    <property type="evidence" value="ECO:0000314"/>
    <property type="project" value="HPA"/>
</dbReference>
<dbReference type="GO" id="GO:0005634">
    <property type="term" value="C:nucleus"/>
    <property type="evidence" value="ECO:0000318"/>
    <property type="project" value="GO_Central"/>
</dbReference>
<dbReference type="GO" id="GO:0003723">
    <property type="term" value="F:RNA binding"/>
    <property type="evidence" value="ECO:0007005"/>
    <property type="project" value="UniProtKB"/>
</dbReference>
<dbReference type="GO" id="GO:0003713">
    <property type="term" value="F:transcription coactivator activity"/>
    <property type="evidence" value="ECO:0000318"/>
    <property type="project" value="GO_Central"/>
</dbReference>
<dbReference type="GO" id="GO:0097009">
    <property type="term" value="P:energy homeostasis"/>
    <property type="evidence" value="ECO:0000318"/>
    <property type="project" value="GO_Central"/>
</dbReference>
<dbReference type="GO" id="GO:0045944">
    <property type="term" value="P:positive regulation of transcription by RNA polymerase II"/>
    <property type="evidence" value="ECO:0000318"/>
    <property type="project" value="GO_Central"/>
</dbReference>
<dbReference type="CDD" id="cd12624">
    <property type="entry name" value="RRM_PRC"/>
    <property type="match status" value="1"/>
</dbReference>
<dbReference type="FunFam" id="3.30.70.330:FF:000199">
    <property type="entry name" value="Putative peroxisome proliferator-activated receptor gamma coactivator-related protein 1"/>
    <property type="match status" value="1"/>
</dbReference>
<dbReference type="Gene3D" id="3.30.70.330">
    <property type="match status" value="1"/>
</dbReference>
<dbReference type="InterPro" id="IPR012677">
    <property type="entry name" value="Nucleotide-bd_a/b_plait_sf"/>
</dbReference>
<dbReference type="InterPro" id="IPR034605">
    <property type="entry name" value="PGC-1"/>
</dbReference>
<dbReference type="InterPro" id="IPR034834">
    <property type="entry name" value="PRC_RRM"/>
</dbReference>
<dbReference type="InterPro" id="IPR035979">
    <property type="entry name" value="RBD_domain_sf"/>
</dbReference>
<dbReference type="InterPro" id="IPR000504">
    <property type="entry name" value="RRM_dom"/>
</dbReference>
<dbReference type="PANTHER" id="PTHR15528">
    <property type="entry name" value="PEROXISOME PROLIFERATOR ACTIVATED RECEPTOR GAMMA COACTIVATOR 1 PGC-1 -RELATED"/>
    <property type="match status" value="1"/>
</dbReference>
<dbReference type="PANTHER" id="PTHR15528:SF5">
    <property type="entry name" value="PEROXISOME PROLIFERATOR-ACTIVATED RECEPTOR GAMMA COACTIVATOR-RELATED PROTEIN 1"/>
    <property type="match status" value="1"/>
</dbReference>
<dbReference type="Pfam" id="PF00076">
    <property type="entry name" value="RRM_1"/>
    <property type="match status" value="1"/>
</dbReference>
<dbReference type="SMART" id="SM00360">
    <property type="entry name" value="RRM"/>
    <property type="match status" value="1"/>
</dbReference>
<dbReference type="SUPFAM" id="SSF54928">
    <property type="entry name" value="RNA-binding domain, RBD"/>
    <property type="match status" value="1"/>
</dbReference>
<dbReference type="PROSITE" id="PS50102">
    <property type="entry name" value="RRM"/>
    <property type="match status" value="1"/>
</dbReference>
<proteinExistence type="evidence at protein level"/>
<organism>
    <name type="scientific">Homo sapiens</name>
    <name type="common">Human</name>
    <dbReference type="NCBI Taxonomy" id="9606"/>
    <lineage>
        <taxon>Eukaryota</taxon>
        <taxon>Metazoa</taxon>
        <taxon>Chordata</taxon>
        <taxon>Craniata</taxon>
        <taxon>Vertebrata</taxon>
        <taxon>Euteleostomi</taxon>
        <taxon>Mammalia</taxon>
        <taxon>Eutheria</taxon>
        <taxon>Euarchontoglires</taxon>
        <taxon>Primates</taxon>
        <taxon>Haplorrhini</taxon>
        <taxon>Catarrhini</taxon>
        <taxon>Hominidae</taxon>
        <taxon>Homo</taxon>
    </lineage>
</organism>
<evidence type="ECO:0000250" key="1"/>
<evidence type="ECO:0000255" key="2">
    <source>
        <dbReference type="PROSITE-ProRule" id="PRU00176"/>
    </source>
</evidence>
<evidence type="ECO:0000256" key="3">
    <source>
        <dbReference type="SAM" id="MobiDB-lite"/>
    </source>
</evidence>
<evidence type="ECO:0000269" key="4">
    <source>
    </source>
</evidence>
<evidence type="ECO:0000269" key="5">
    <source>
    </source>
</evidence>
<evidence type="ECO:0000269" key="6">
    <source>
    </source>
</evidence>
<evidence type="ECO:0000269" key="7">
    <source>
    </source>
</evidence>
<evidence type="ECO:0000269" key="8">
    <source>
    </source>
</evidence>
<evidence type="ECO:0000303" key="9">
    <source>
    </source>
</evidence>
<evidence type="ECO:0000305" key="10"/>
<evidence type="ECO:0007744" key="11">
    <source>
    </source>
</evidence>
<evidence type="ECO:0007744" key="12">
    <source>
    </source>
</evidence>
<evidence type="ECO:0007744" key="13">
    <source>
    </source>
</evidence>
<name>PPRC1_HUMAN</name>
<keyword id="KW-0010">Activator</keyword>
<keyword id="KW-0025">Alternative splicing</keyword>
<keyword id="KW-0539">Nucleus</keyword>
<keyword id="KW-0597">Phosphoprotein</keyword>
<keyword id="KW-1267">Proteomics identification</keyword>
<keyword id="KW-1185">Reference proteome</keyword>
<keyword id="KW-0694">RNA-binding</keyword>
<keyword id="KW-0804">Transcription</keyword>
<keyword id="KW-0805">Transcription regulation</keyword>
<protein>
    <recommendedName>
        <fullName>Peroxisome proliferator-activated receptor gamma coactivator-related protein 1</fullName>
    </recommendedName>
    <alternativeName>
        <fullName>PGC-1-related coactivator</fullName>
        <shortName>PRC</shortName>
    </alternativeName>
</protein>
<comment type="function">
    <text evidence="4 7">Acts as a coactivator during transcriptional activation of nuclear genes related to mitochondrial biogenesis and cell growth. Involved in the transcription coactivation of CREB and NRF1 target genes.</text>
</comment>
<comment type="subunit">
    <text evidence="4 7">Interacts with CREB1 and NRF1.</text>
</comment>
<comment type="subcellular location">
    <subcellularLocation>
        <location evidence="4">Nucleus</location>
    </subcellularLocation>
    <text evidence="1">Colocalizes with NRF1.</text>
</comment>
<comment type="alternative products">
    <event type="alternative splicing"/>
    <isoform>
        <id>Q5VV67-1</id>
        <name>1</name>
        <sequence type="displayed"/>
    </isoform>
    <isoform>
        <id>Q5VV67-2</id>
        <name>2</name>
        <sequence type="described" ref="VSP_027229 VSP_027230 VSP_027231"/>
    </isoform>
</comment>
<comment type="tissue specificity">
    <text evidence="4 5">Strongly expressed in heart and skeletal muscle, moderately in lung, placenta, intestine, liver, kidney, spleen, thymus, colon and brain. Also expressed in several oncocytic thyroid tumors.</text>
</comment>
<comment type="induction">
    <text evidence="7">Up-regulated by serum (at protein level).</text>
</comment>
<comment type="sequence caution" evidence="10">
    <conflict type="frameshift">
        <sequence resource="EMBL-CDS" id="AAH02561"/>
    </conflict>
</comment>
<comment type="sequence caution" evidence="10">
    <conflict type="erroneous initiation">
        <sequence resource="EMBL-CDS" id="BAA25521"/>
    </conflict>
</comment>